<geneLocation type="mitochondrion"/>
<comment type="function">
    <text evidence="2">Component of the cytochrome c oxidase, the last enzyme in the mitochondrial electron transport chain which drives oxidative phosphorylation. The respiratory chain contains 3 multisubunit complexes succinate dehydrogenase (complex II, CII), ubiquinol-cytochrome c oxidoreductase (cytochrome b-c1 complex, complex III, CIII) and cytochrome c oxidase (complex IV, CIV), that cooperate to transfer electrons derived from NADH and succinate to molecular oxygen, creating an electrochemical gradient over the inner membrane that drives transmembrane transport and the ATP synthase. Cytochrome c oxidase is the component of the respiratory chain that catalyzes the reduction of oxygen to water. Electrons originating from reduced cytochrome c in the intermembrane space (IMS) are transferred via the dinuclear copper A center (CU(A)) of subunit 2 and heme A of subunit 1 to the active site in subunit 1, a binuclear center (BNC) formed by heme A3 and copper B (CU(B)). The BNC reduces molecular oxygen to 2 water molecules using 4 electrons from cytochrome c in the IMS and 4 protons from the mitochondrial matrix.</text>
</comment>
<comment type="catalytic activity">
    <reaction evidence="2">
        <text>4 Fe(II)-[cytochrome c] + O2 + 8 H(+)(in) = 4 Fe(III)-[cytochrome c] + 2 H2O + 4 H(+)(out)</text>
        <dbReference type="Rhea" id="RHEA:11436"/>
        <dbReference type="Rhea" id="RHEA-COMP:10350"/>
        <dbReference type="Rhea" id="RHEA-COMP:14399"/>
        <dbReference type="ChEBI" id="CHEBI:15377"/>
        <dbReference type="ChEBI" id="CHEBI:15378"/>
        <dbReference type="ChEBI" id="CHEBI:15379"/>
        <dbReference type="ChEBI" id="CHEBI:29033"/>
        <dbReference type="ChEBI" id="CHEBI:29034"/>
        <dbReference type="EC" id="7.1.1.9"/>
    </reaction>
    <physiologicalReaction direction="left-to-right" evidence="2">
        <dbReference type="Rhea" id="RHEA:11437"/>
    </physiologicalReaction>
</comment>
<comment type="cofactor">
    <cofactor evidence="3">
        <name>Cu cation</name>
        <dbReference type="ChEBI" id="CHEBI:23378"/>
    </cofactor>
    <text evidence="3">Binds a dinuclear copper A center per subunit.</text>
</comment>
<comment type="subunit">
    <text evidence="1 3">Component of the cytochrome c oxidase (complex IV, CIV), a multisubunit enzyme composed of 14 subunits. The complex is composed of a catalytic core of 3 subunits MT-CO1, MT-CO2 and MT-CO3, encoded in the mitochondrial DNA, and 11 supernumerary subunits COX4I, COX5A, COX5B, COX6A, COX6B, COX6C, COX7A, COX7B, COX7C, COX8 and NDUFA4, which are encoded in the nuclear genome. The complex exists as a monomer or a dimer and forms supercomplexes (SCs) in the inner mitochondrial membrane with NADH-ubiquinone oxidoreductase (complex I, CI) and ubiquinol-cytochrome c oxidoreductase (cytochrome b-c1 complex, complex III, CIII), resulting in different assemblies (supercomplex SCI(1)III(2)IV(1) and megacomplex MCI(2)III(2)IV(2)) (By similarity). Found in a complex with TMEM177, COA6, COX18, COX20, SCO1 and SCO2. Interacts with TMEM177 in a COX20-dependent manner. Interacts with COX20. Interacts with COX16 (By similarity).</text>
</comment>
<comment type="subcellular location">
    <subcellularLocation>
        <location evidence="3">Mitochondrion inner membrane</location>
        <topology evidence="3">Multi-pass membrane protein</topology>
    </subcellularLocation>
</comment>
<comment type="similarity">
    <text evidence="4">Belongs to the cytochrome c oxidase subunit 2 family.</text>
</comment>
<accession>Q38RU1</accession>
<evidence type="ECO:0000250" key="1">
    <source>
        <dbReference type="UniProtKB" id="P00403"/>
    </source>
</evidence>
<evidence type="ECO:0000250" key="2">
    <source>
        <dbReference type="UniProtKB" id="P00410"/>
    </source>
</evidence>
<evidence type="ECO:0000250" key="3">
    <source>
        <dbReference type="UniProtKB" id="P68530"/>
    </source>
</evidence>
<evidence type="ECO:0000305" key="4"/>
<reference key="1">
    <citation type="journal article" date="2005" name="Mol. Phylogenet. Evol.">
        <title>Multigene phylogeny of the Old World mice, Murinae, reveals distinct geographic lineages and the declining utility of mitochondrial genes compared to nuclear genes.</title>
        <authorList>
            <person name="Steppan S.J."/>
            <person name="Adkins R.M."/>
            <person name="Spinks P.Q."/>
            <person name="Hale C."/>
        </authorList>
    </citation>
    <scope>NUCLEOTIDE SEQUENCE [GENOMIC DNA]</scope>
</reference>
<organism>
    <name type="scientific">Zelotomys hildegardeae</name>
    <name type="common">Hildegarde's broad-headed mouse</name>
    <dbReference type="NCBI Taxonomy" id="209873"/>
    <lineage>
        <taxon>Eukaryota</taxon>
        <taxon>Metazoa</taxon>
        <taxon>Chordata</taxon>
        <taxon>Craniata</taxon>
        <taxon>Vertebrata</taxon>
        <taxon>Euteleostomi</taxon>
        <taxon>Mammalia</taxon>
        <taxon>Eutheria</taxon>
        <taxon>Euarchontoglires</taxon>
        <taxon>Glires</taxon>
        <taxon>Rodentia</taxon>
        <taxon>Myomorpha</taxon>
        <taxon>Muroidea</taxon>
        <taxon>Muridae</taxon>
        <taxon>Murinae</taxon>
        <taxon>Zelotomys</taxon>
    </lineage>
</organism>
<name>COX2_ZELHI</name>
<feature type="chain" id="PRO_0000257863" description="Cytochrome c oxidase subunit 2">
    <location>
        <begin position="1"/>
        <end position="227"/>
    </location>
</feature>
<feature type="topological domain" description="Mitochondrial intermembrane" evidence="3">
    <location>
        <begin position="1"/>
        <end position="14"/>
    </location>
</feature>
<feature type="transmembrane region" description="Helical; Name=I" evidence="3">
    <location>
        <begin position="15"/>
        <end position="45"/>
    </location>
</feature>
<feature type="topological domain" description="Mitochondrial matrix" evidence="3">
    <location>
        <begin position="46"/>
        <end position="59"/>
    </location>
</feature>
<feature type="transmembrane region" description="Helical; Name=II" evidence="3">
    <location>
        <begin position="60"/>
        <end position="87"/>
    </location>
</feature>
<feature type="topological domain" description="Mitochondrial intermembrane" evidence="3">
    <location>
        <begin position="88"/>
        <end position="227"/>
    </location>
</feature>
<feature type="binding site" evidence="3">
    <location>
        <position position="161"/>
    </location>
    <ligand>
        <name>Cu cation</name>
        <dbReference type="ChEBI" id="CHEBI:23378"/>
        <label>A1</label>
    </ligand>
</feature>
<feature type="binding site" evidence="3">
    <location>
        <position position="196"/>
    </location>
    <ligand>
        <name>Cu cation</name>
        <dbReference type="ChEBI" id="CHEBI:23378"/>
        <label>A1</label>
    </ligand>
</feature>
<feature type="binding site" evidence="3">
    <location>
        <position position="196"/>
    </location>
    <ligand>
        <name>Cu cation</name>
        <dbReference type="ChEBI" id="CHEBI:23378"/>
        <label>A2</label>
    </ligand>
</feature>
<feature type="binding site" evidence="3">
    <location>
        <position position="198"/>
    </location>
    <ligand>
        <name>Cu cation</name>
        <dbReference type="ChEBI" id="CHEBI:23378"/>
        <label>A2</label>
    </ligand>
</feature>
<feature type="binding site" evidence="3">
    <location>
        <position position="198"/>
    </location>
    <ligand>
        <name>Mg(2+)</name>
        <dbReference type="ChEBI" id="CHEBI:18420"/>
        <note>ligand shared with MT-CO1</note>
    </ligand>
</feature>
<feature type="binding site" evidence="3">
    <location>
        <position position="200"/>
    </location>
    <ligand>
        <name>Cu cation</name>
        <dbReference type="ChEBI" id="CHEBI:23378"/>
        <label>A1</label>
    </ligand>
</feature>
<feature type="binding site" evidence="3">
    <location>
        <position position="200"/>
    </location>
    <ligand>
        <name>Cu cation</name>
        <dbReference type="ChEBI" id="CHEBI:23378"/>
        <label>A2</label>
    </ligand>
</feature>
<feature type="binding site" evidence="3">
    <location>
        <position position="204"/>
    </location>
    <ligand>
        <name>Cu cation</name>
        <dbReference type="ChEBI" id="CHEBI:23378"/>
        <label>A2</label>
    </ligand>
</feature>
<feature type="binding site" evidence="3">
    <location>
        <position position="207"/>
    </location>
    <ligand>
        <name>Cu cation</name>
        <dbReference type="ChEBI" id="CHEBI:23378"/>
        <label>A1</label>
    </ligand>
</feature>
<proteinExistence type="inferred from homology"/>
<dbReference type="EC" id="7.1.1.9"/>
<dbReference type="EMBL" id="DQ019123">
    <property type="protein sequence ID" value="ABA28459.1"/>
    <property type="molecule type" value="Genomic_DNA"/>
</dbReference>
<dbReference type="SMR" id="Q38RU1"/>
<dbReference type="GO" id="GO:0005743">
    <property type="term" value="C:mitochondrial inner membrane"/>
    <property type="evidence" value="ECO:0007669"/>
    <property type="project" value="UniProtKB-SubCell"/>
</dbReference>
<dbReference type="GO" id="GO:0045277">
    <property type="term" value="C:respiratory chain complex IV"/>
    <property type="evidence" value="ECO:0000250"/>
    <property type="project" value="UniProtKB"/>
</dbReference>
<dbReference type="GO" id="GO:0005507">
    <property type="term" value="F:copper ion binding"/>
    <property type="evidence" value="ECO:0007669"/>
    <property type="project" value="InterPro"/>
</dbReference>
<dbReference type="GO" id="GO:0004129">
    <property type="term" value="F:cytochrome-c oxidase activity"/>
    <property type="evidence" value="ECO:0007669"/>
    <property type="project" value="UniProtKB-EC"/>
</dbReference>
<dbReference type="GO" id="GO:0042773">
    <property type="term" value="P:ATP synthesis coupled electron transport"/>
    <property type="evidence" value="ECO:0007669"/>
    <property type="project" value="TreeGrafter"/>
</dbReference>
<dbReference type="CDD" id="cd13912">
    <property type="entry name" value="CcO_II_C"/>
    <property type="match status" value="1"/>
</dbReference>
<dbReference type="FunFam" id="1.10.287.90:FF:000001">
    <property type="entry name" value="Cytochrome c oxidase subunit 2"/>
    <property type="match status" value="1"/>
</dbReference>
<dbReference type="FunFam" id="2.60.40.420:FF:000001">
    <property type="entry name" value="Cytochrome c oxidase subunit 2"/>
    <property type="match status" value="1"/>
</dbReference>
<dbReference type="Gene3D" id="1.10.287.90">
    <property type="match status" value="1"/>
</dbReference>
<dbReference type="Gene3D" id="2.60.40.420">
    <property type="entry name" value="Cupredoxins - blue copper proteins"/>
    <property type="match status" value="1"/>
</dbReference>
<dbReference type="InterPro" id="IPR045187">
    <property type="entry name" value="CcO_II"/>
</dbReference>
<dbReference type="InterPro" id="IPR002429">
    <property type="entry name" value="CcO_II-like_C"/>
</dbReference>
<dbReference type="InterPro" id="IPR034210">
    <property type="entry name" value="CcO_II_C"/>
</dbReference>
<dbReference type="InterPro" id="IPR001505">
    <property type="entry name" value="Copper_CuA"/>
</dbReference>
<dbReference type="InterPro" id="IPR008972">
    <property type="entry name" value="Cupredoxin"/>
</dbReference>
<dbReference type="InterPro" id="IPR014222">
    <property type="entry name" value="Cyt_c_oxidase_su2"/>
</dbReference>
<dbReference type="InterPro" id="IPR011759">
    <property type="entry name" value="Cyt_c_oxidase_su2_TM_dom"/>
</dbReference>
<dbReference type="InterPro" id="IPR036257">
    <property type="entry name" value="Cyt_c_oxidase_su2_TM_sf"/>
</dbReference>
<dbReference type="NCBIfam" id="TIGR02866">
    <property type="entry name" value="CoxB"/>
    <property type="match status" value="1"/>
</dbReference>
<dbReference type="PANTHER" id="PTHR22888:SF9">
    <property type="entry name" value="CYTOCHROME C OXIDASE SUBUNIT 2"/>
    <property type="match status" value="1"/>
</dbReference>
<dbReference type="PANTHER" id="PTHR22888">
    <property type="entry name" value="CYTOCHROME C OXIDASE, SUBUNIT II"/>
    <property type="match status" value="1"/>
</dbReference>
<dbReference type="Pfam" id="PF00116">
    <property type="entry name" value="COX2"/>
    <property type="match status" value="1"/>
</dbReference>
<dbReference type="Pfam" id="PF02790">
    <property type="entry name" value="COX2_TM"/>
    <property type="match status" value="1"/>
</dbReference>
<dbReference type="PRINTS" id="PR01166">
    <property type="entry name" value="CYCOXIDASEII"/>
</dbReference>
<dbReference type="SUPFAM" id="SSF49503">
    <property type="entry name" value="Cupredoxins"/>
    <property type="match status" value="1"/>
</dbReference>
<dbReference type="SUPFAM" id="SSF81464">
    <property type="entry name" value="Cytochrome c oxidase subunit II-like, transmembrane region"/>
    <property type="match status" value="1"/>
</dbReference>
<dbReference type="PROSITE" id="PS00078">
    <property type="entry name" value="COX2"/>
    <property type="match status" value="1"/>
</dbReference>
<dbReference type="PROSITE" id="PS50857">
    <property type="entry name" value="COX2_CUA"/>
    <property type="match status" value="1"/>
</dbReference>
<dbReference type="PROSITE" id="PS50999">
    <property type="entry name" value="COX2_TM"/>
    <property type="match status" value="1"/>
</dbReference>
<protein>
    <recommendedName>
        <fullName>Cytochrome c oxidase subunit 2</fullName>
        <ecNumber>7.1.1.9</ecNumber>
    </recommendedName>
    <alternativeName>
        <fullName>Cytochrome c oxidase polypeptide II</fullName>
    </alternativeName>
</protein>
<gene>
    <name type="primary">MT-CO2</name>
    <name type="synonym">COII</name>
    <name type="synonym">COXII</name>
    <name type="synonym">MTCO2</name>
</gene>
<sequence length="227" mass="25902">MAYPLQLGLQDATSPIMEELMNFHDHTLMIVFLISSLVLYIISLMLTTKLTHTSTMDAQEVETIWTILPAVILIMIALPSLRILYMMDEINNPVLTVKTMGHQWYWSYEYTDYEDLCFDSYMVPTNDLKPGELRLLEVDNRVVLPMELPIRMLISSEDVLHSWAVPSLGLKTDAIPGRLNQATVTSNRPGLFYGQCSEICGSNHSFMPIVLEMVPLKHFENWSASMI</sequence>
<keyword id="KW-0186">Copper</keyword>
<keyword id="KW-0249">Electron transport</keyword>
<keyword id="KW-0460">Magnesium</keyword>
<keyword id="KW-0472">Membrane</keyword>
<keyword id="KW-0479">Metal-binding</keyword>
<keyword id="KW-0496">Mitochondrion</keyword>
<keyword id="KW-0999">Mitochondrion inner membrane</keyword>
<keyword id="KW-0679">Respiratory chain</keyword>
<keyword id="KW-1278">Translocase</keyword>
<keyword id="KW-0812">Transmembrane</keyword>
<keyword id="KW-1133">Transmembrane helix</keyword>
<keyword id="KW-0813">Transport</keyword>